<sequence length="326" mass="33377">MSTKIAVLGGGAWGTALAAMAAKGGHESWLYARDAETVVAINKDRRNPRYLGDITLADGIRASTDAAAVVTGADAVLAVIPAQAMRNGLSELGTLIPQASPIVLCAKGIEQNTGRLMSEVVAEILPDHRIAALSGPSFASDVARGLPTAVTVACEDANTADRLAALLSGPAFRCYSTTDLKGVETGGALKNVLAIAAGAAIGRGYGASAQAALVTRGFAELRRIGQAMSARPETIMGLSGLGDLMLTCSSSQSRNYSYGLALGRGEDLTSRPLAEGVATAPIAAELCRKHNISAPIIDAVGALLDGKITIDEAVTALLNRPLKTED</sequence>
<comment type="function">
    <text evidence="1">Catalyzes the reduction of the glycolytic intermediate dihydroxyacetone phosphate (DHAP) to sn-glycerol 3-phosphate (G3P), the key precursor for phospholipid synthesis.</text>
</comment>
<comment type="catalytic activity">
    <reaction evidence="1">
        <text>sn-glycerol 3-phosphate + NAD(+) = dihydroxyacetone phosphate + NADH + H(+)</text>
        <dbReference type="Rhea" id="RHEA:11092"/>
        <dbReference type="ChEBI" id="CHEBI:15378"/>
        <dbReference type="ChEBI" id="CHEBI:57540"/>
        <dbReference type="ChEBI" id="CHEBI:57597"/>
        <dbReference type="ChEBI" id="CHEBI:57642"/>
        <dbReference type="ChEBI" id="CHEBI:57945"/>
        <dbReference type="EC" id="1.1.1.94"/>
    </reaction>
    <physiologicalReaction direction="right-to-left" evidence="1">
        <dbReference type="Rhea" id="RHEA:11094"/>
    </physiologicalReaction>
</comment>
<comment type="catalytic activity">
    <reaction evidence="1">
        <text>sn-glycerol 3-phosphate + NADP(+) = dihydroxyacetone phosphate + NADPH + H(+)</text>
        <dbReference type="Rhea" id="RHEA:11096"/>
        <dbReference type="ChEBI" id="CHEBI:15378"/>
        <dbReference type="ChEBI" id="CHEBI:57597"/>
        <dbReference type="ChEBI" id="CHEBI:57642"/>
        <dbReference type="ChEBI" id="CHEBI:57783"/>
        <dbReference type="ChEBI" id="CHEBI:58349"/>
        <dbReference type="EC" id="1.1.1.94"/>
    </reaction>
    <physiologicalReaction direction="right-to-left" evidence="1">
        <dbReference type="Rhea" id="RHEA:11098"/>
    </physiologicalReaction>
</comment>
<comment type="pathway">
    <text evidence="1">Membrane lipid metabolism; glycerophospholipid metabolism.</text>
</comment>
<comment type="subcellular location">
    <subcellularLocation>
        <location evidence="1">Cytoplasm</location>
    </subcellularLocation>
</comment>
<comment type="similarity">
    <text evidence="1">Belongs to the NAD-dependent glycerol-3-phosphate dehydrogenase family.</text>
</comment>
<keyword id="KW-0963">Cytoplasm</keyword>
<keyword id="KW-0444">Lipid biosynthesis</keyword>
<keyword id="KW-0443">Lipid metabolism</keyword>
<keyword id="KW-0520">NAD</keyword>
<keyword id="KW-0521">NADP</keyword>
<keyword id="KW-0547">Nucleotide-binding</keyword>
<keyword id="KW-0560">Oxidoreductase</keyword>
<keyword id="KW-0594">Phospholipid biosynthesis</keyword>
<keyword id="KW-1208">Phospholipid metabolism</keyword>
<feature type="chain" id="PRO_0000137934" description="Glycerol-3-phosphate dehydrogenase [NAD(P)+]">
    <location>
        <begin position="1"/>
        <end position="326"/>
    </location>
</feature>
<feature type="active site" description="Proton acceptor" evidence="1">
    <location>
        <position position="190"/>
    </location>
</feature>
<feature type="binding site" evidence="1">
    <location>
        <position position="13"/>
    </location>
    <ligand>
        <name>NADPH</name>
        <dbReference type="ChEBI" id="CHEBI:57783"/>
    </ligand>
</feature>
<feature type="binding site" evidence="1">
    <location>
        <position position="33"/>
    </location>
    <ligand>
        <name>NADPH</name>
        <dbReference type="ChEBI" id="CHEBI:57783"/>
    </ligand>
</feature>
<feature type="binding site" evidence="1">
    <location>
        <position position="107"/>
    </location>
    <ligand>
        <name>NADPH</name>
        <dbReference type="ChEBI" id="CHEBI:57783"/>
    </ligand>
</feature>
<feature type="binding site" evidence="1">
    <location>
        <position position="107"/>
    </location>
    <ligand>
        <name>sn-glycerol 3-phosphate</name>
        <dbReference type="ChEBI" id="CHEBI:57597"/>
    </ligand>
</feature>
<feature type="binding site" evidence="1">
    <location>
        <position position="135"/>
    </location>
    <ligand>
        <name>sn-glycerol 3-phosphate</name>
        <dbReference type="ChEBI" id="CHEBI:57597"/>
    </ligand>
</feature>
<feature type="binding site" evidence="1">
    <location>
        <position position="137"/>
    </location>
    <ligand>
        <name>sn-glycerol 3-phosphate</name>
        <dbReference type="ChEBI" id="CHEBI:57597"/>
    </ligand>
</feature>
<feature type="binding site" evidence="1">
    <location>
        <position position="139"/>
    </location>
    <ligand>
        <name>NADPH</name>
        <dbReference type="ChEBI" id="CHEBI:57783"/>
    </ligand>
</feature>
<feature type="binding site" evidence="1">
    <location>
        <position position="190"/>
    </location>
    <ligand>
        <name>sn-glycerol 3-phosphate</name>
        <dbReference type="ChEBI" id="CHEBI:57597"/>
    </ligand>
</feature>
<feature type="binding site" evidence="1">
    <location>
        <position position="243"/>
    </location>
    <ligand>
        <name>sn-glycerol 3-phosphate</name>
        <dbReference type="ChEBI" id="CHEBI:57597"/>
    </ligand>
</feature>
<feature type="binding site" evidence="1">
    <location>
        <position position="253"/>
    </location>
    <ligand>
        <name>sn-glycerol 3-phosphate</name>
        <dbReference type="ChEBI" id="CHEBI:57597"/>
    </ligand>
</feature>
<feature type="binding site" evidence="1">
    <location>
        <position position="254"/>
    </location>
    <ligand>
        <name>NADPH</name>
        <dbReference type="ChEBI" id="CHEBI:57783"/>
    </ligand>
</feature>
<feature type="binding site" evidence="1">
    <location>
        <position position="254"/>
    </location>
    <ligand>
        <name>sn-glycerol 3-phosphate</name>
        <dbReference type="ChEBI" id="CHEBI:57597"/>
    </ligand>
</feature>
<feature type="binding site" evidence="1">
    <location>
        <position position="255"/>
    </location>
    <ligand>
        <name>sn-glycerol 3-phosphate</name>
        <dbReference type="ChEBI" id="CHEBI:57597"/>
    </ligand>
</feature>
<feature type="binding site" evidence="1">
    <location>
        <position position="273"/>
    </location>
    <ligand>
        <name>NADPH</name>
        <dbReference type="ChEBI" id="CHEBI:57783"/>
    </ligand>
</feature>
<feature type="binding site" evidence="1">
    <location>
        <position position="275"/>
    </location>
    <ligand>
        <name>NADPH</name>
        <dbReference type="ChEBI" id="CHEBI:57783"/>
    </ligand>
</feature>
<dbReference type="EC" id="1.1.1.94" evidence="1"/>
<dbReference type="EMBL" id="AE008917">
    <property type="protein sequence ID" value="AAL51356.1"/>
    <property type="molecule type" value="Genomic_DNA"/>
</dbReference>
<dbReference type="PIR" id="AI3273">
    <property type="entry name" value="AI3273"/>
</dbReference>
<dbReference type="RefSeq" id="WP_002964959.1">
    <property type="nucleotide sequence ID" value="NZ_GG703778.1"/>
</dbReference>
<dbReference type="SMR" id="P64186"/>
<dbReference type="KEGG" id="bme:BMEI0174"/>
<dbReference type="KEGG" id="bmel:DK63_1262"/>
<dbReference type="PATRIC" id="fig|224914.52.peg.1330"/>
<dbReference type="eggNOG" id="COG0240">
    <property type="taxonomic scope" value="Bacteria"/>
</dbReference>
<dbReference type="PhylomeDB" id="P64186"/>
<dbReference type="UniPathway" id="UPA00940"/>
<dbReference type="Proteomes" id="UP000000419">
    <property type="component" value="Chromosome I"/>
</dbReference>
<dbReference type="GO" id="GO:0005829">
    <property type="term" value="C:cytosol"/>
    <property type="evidence" value="ECO:0007669"/>
    <property type="project" value="TreeGrafter"/>
</dbReference>
<dbReference type="GO" id="GO:0047952">
    <property type="term" value="F:glycerol-3-phosphate dehydrogenase [NAD(P)+] activity"/>
    <property type="evidence" value="ECO:0007669"/>
    <property type="project" value="UniProtKB-UniRule"/>
</dbReference>
<dbReference type="GO" id="GO:0051287">
    <property type="term" value="F:NAD binding"/>
    <property type="evidence" value="ECO:0007669"/>
    <property type="project" value="InterPro"/>
</dbReference>
<dbReference type="GO" id="GO:0005975">
    <property type="term" value="P:carbohydrate metabolic process"/>
    <property type="evidence" value="ECO:0007669"/>
    <property type="project" value="InterPro"/>
</dbReference>
<dbReference type="GO" id="GO:0046167">
    <property type="term" value="P:glycerol-3-phosphate biosynthetic process"/>
    <property type="evidence" value="ECO:0007669"/>
    <property type="project" value="UniProtKB-UniRule"/>
</dbReference>
<dbReference type="GO" id="GO:0046168">
    <property type="term" value="P:glycerol-3-phosphate catabolic process"/>
    <property type="evidence" value="ECO:0007669"/>
    <property type="project" value="InterPro"/>
</dbReference>
<dbReference type="GO" id="GO:0006650">
    <property type="term" value="P:glycerophospholipid metabolic process"/>
    <property type="evidence" value="ECO:0007669"/>
    <property type="project" value="UniProtKB-UniRule"/>
</dbReference>
<dbReference type="GO" id="GO:0008654">
    <property type="term" value="P:phospholipid biosynthetic process"/>
    <property type="evidence" value="ECO:0007669"/>
    <property type="project" value="UniProtKB-KW"/>
</dbReference>
<dbReference type="FunFam" id="3.40.50.720:FF:000019">
    <property type="entry name" value="Glycerol-3-phosphate dehydrogenase [NAD(P)+]"/>
    <property type="match status" value="1"/>
</dbReference>
<dbReference type="Gene3D" id="1.10.1040.10">
    <property type="entry name" value="N-(1-d-carboxylethyl)-l-norvaline Dehydrogenase, domain 2"/>
    <property type="match status" value="1"/>
</dbReference>
<dbReference type="Gene3D" id="3.40.50.720">
    <property type="entry name" value="NAD(P)-binding Rossmann-like Domain"/>
    <property type="match status" value="1"/>
</dbReference>
<dbReference type="HAMAP" id="MF_00394">
    <property type="entry name" value="NAD_Glyc3P_dehydrog"/>
    <property type="match status" value="1"/>
</dbReference>
<dbReference type="InterPro" id="IPR008927">
    <property type="entry name" value="6-PGluconate_DH-like_C_sf"/>
</dbReference>
<dbReference type="InterPro" id="IPR013328">
    <property type="entry name" value="6PGD_dom2"/>
</dbReference>
<dbReference type="InterPro" id="IPR006168">
    <property type="entry name" value="G3P_DH_NAD-dep"/>
</dbReference>
<dbReference type="InterPro" id="IPR006109">
    <property type="entry name" value="G3P_DH_NAD-dep_C"/>
</dbReference>
<dbReference type="InterPro" id="IPR011128">
    <property type="entry name" value="G3P_DH_NAD-dep_N"/>
</dbReference>
<dbReference type="InterPro" id="IPR036291">
    <property type="entry name" value="NAD(P)-bd_dom_sf"/>
</dbReference>
<dbReference type="NCBIfam" id="NF000940">
    <property type="entry name" value="PRK00094.1-2"/>
    <property type="match status" value="1"/>
</dbReference>
<dbReference type="NCBIfam" id="NF000942">
    <property type="entry name" value="PRK00094.1-4"/>
    <property type="match status" value="1"/>
</dbReference>
<dbReference type="PANTHER" id="PTHR11728">
    <property type="entry name" value="GLYCEROL-3-PHOSPHATE DEHYDROGENASE"/>
    <property type="match status" value="1"/>
</dbReference>
<dbReference type="PANTHER" id="PTHR11728:SF1">
    <property type="entry name" value="GLYCEROL-3-PHOSPHATE DEHYDROGENASE [NAD(+)] 2, CHLOROPLASTIC"/>
    <property type="match status" value="1"/>
</dbReference>
<dbReference type="Pfam" id="PF07479">
    <property type="entry name" value="NAD_Gly3P_dh_C"/>
    <property type="match status" value="1"/>
</dbReference>
<dbReference type="Pfam" id="PF01210">
    <property type="entry name" value="NAD_Gly3P_dh_N"/>
    <property type="match status" value="1"/>
</dbReference>
<dbReference type="PIRSF" id="PIRSF000114">
    <property type="entry name" value="Glycerol-3-P_dh"/>
    <property type="match status" value="1"/>
</dbReference>
<dbReference type="PRINTS" id="PR00077">
    <property type="entry name" value="GPDHDRGNASE"/>
</dbReference>
<dbReference type="SUPFAM" id="SSF48179">
    <property type="entry name" value="6-phosphogluconate dehydrogenase C-terminal domain-like"/>
    <property type="match status" value="1"/>
</dbReference>
<dbReference type="SUPFAM" id="SSF51735">
    <property type="entry name" value="NAD(P)-binding Rossmann-fold domains"/>
    <property type="match status" value="1"/>
</dbReference>
<dbReference type="PROSITE" id="PS00957">
    <property type="entry name" value="NAD_G3PDH"/>
    <property type="match status" value="1"/>
</dbReference>
<gene>
    <name evidence="1" type="primary">gpsA</name>
    <name type="ordered locus">BMEI0174</name>
</gene>
<name>GPDA_BRUME</name>
<protein>
    <recommendedName>
        <fullName evidence="1">Glycerol-3-phosphate dehydrogenase [NAD(P)+]</fullName>
        <ecNumber evidence="1">1.1.1.94</ecNumber>
    </recommendedName>
    <alternativeName>
        <fullName evidence="1">NAD(P)(+)-dependent glycerol-3-phosphate dehydrogenase</fullName>
    </alternativeName>
    <alternativeName>
        <fullName evidence="1">NAD(P)H-dependent dihydroxyacetone-phosphate reductase</fullName>
    </alternativeName>
</protein>
<organism>
    <name type="scientific">Brucella melitensis biotype 1 (strain ATCC 23456 / CCUG 17765 / NCTC 10094 / 16M)</name>
    <dbReference type="NCBI Taxonomy" id="224914"/>
    <lineage>
        <taxon>Bacteria</taxon>
        <taxon>Pseudomonadati</taxon>
        <taxon>Pseudomonadota</taxon>
        <taxon>Alphaproteobacteria</taxon>
        <taxon>Hyphomicrobiales</taxon>
        <taxon>Brucellaceae</taxon>
        <taxon>Brucella/Ochrobactrum group</taxon>
        <taxon>Brucella</taxon>
    </lineage>
</organism>
<reference key="1">
    <citation type="journal article" date="2002" name="Proc. Natl. Acad. Sci. U.S.A.">
        <title>The genome sequence of the facultative intracellular pathogen Brucella melitensis.</title>
        <authorList>
            <person name="DelVecchio V.G."/>
            <person name="Kapatral V."/>
            <person name="Redkar R.J."/>
            <person name="Patra G."/>
            <person name="Mujer C."/>
            <person name="Los T."/>
            <person name="Ivanova N."/>
            <person name="Anderson I."/>
            <person name="Bhattacharyya A."/>
            <person name="Lykidis A."/>
            <person name="Reznik G."/>
            <person name="Jablonski L."/>
            <person name="Larsen N."/>
            <person name="D'Souza M."/>
            <person name="Bernal A."/>
            <person name="Mazur M."/>
            <person name="Goltsman E."/>
            <person name="Selkov E."/>
            <person name="Elzer P.H."/>
            <person name="Hagius S."/>
            <person name="O'Callaghan D."/>
            <person name="Letesson J.-J."/>
            <person name="Haselkorn R."/>
            <person name="Kyrpides N.C."/>
            <person name="Overbeek R."/>
        </authorList>
    </citation>
    <scope>NUCLEOTIDE SEQUENCE [LARGE SCALE GENOMIC DNA]</scope>
    <source>
        <strain>ATCC 23456 / CCUG 17765 / NCTC 10094 / 16M</strain>
    </source>
</reference>
<accession>P64186</accession>
<accession>Q8YJB2</accession>
<proteinExistence type="inferred from homology"/>
<evidence type="ECO:0000255" key="1">
    <source>
        <dbReference type="HAMAP-Rule" id="MF_00394"/>
    </source>
</evidence>